<accession>Q54ZW5</accession>
<accession>Q86K45</accession>
<proteinExistence type="inferred from homology"/>
<dbReference type="EMBL" id="AAFI02000019">
    <property type="protein sequence ID" value="EAL68859.1"/>
    <property type="molecule type" value="Genomic_DNA"/>
</dbReference>
<dbReference type="RefSeq" id="XP_642751.1">
    <property type="nucleotide sequence ID" value="XM_637659.1"/>
</dbReference>
<dbReference type="SMR" id="Q54ZW5"/>
<dbReference type="FunCoup" id="Q54ZW5">
    <property type="interactions" value="535"/>
</dbReference>
<dbReference type="STRING" id="44689.Q54ZW5"/>
<dbReference type="PaxDb" id="44689-DDB0230021"/>
<dbReference type="EnsemblProtists" id="EAL68859">
    <property type="protein sequence ID" value="EAL68859"/>
    <property type="gene ID" value="DDB_G0277345"/>
</dbReference>
<dbReference type="GeneID" id="8620941"/>
<dbReference type="KEGG" id="ddi:DDB_G0277345"/>
<dbReference type="dictyBase" id="DDB_G0277345">
    <property type="gene designation" value="rps3a"/>
</dbReference>
<dbReference type="VEuPathDB" id="AmoebaDB:DDB_G0277345"/>
<dbReference type="eggNOG" id="KOG1628">
    <property type="taxonomic scope" value="Eukaryota"/>
</dbReference>
<dbReference type="HOGENOM" id="CLU_062507_0_0_1"/>
<dbReference type="InParanoid" id="Q54ZW5"/>
<dbReference type="OMA" id="TRFKGHE"/>
<dbReference type="PhylomeDB" id="Q54ZW5"/>
<dbReference type="Reactome" id="R-DDI-156827">
    <property type="pathway name" value="L13a-mediated translational silencing of Ceruloplasmin expression"/>
</dbReference>
<dbReference type="Reactome" id="R-DDI-1799339">
    <property type="pathway name" value="SRP-dependent cotranslational protein targeting to membrane"/>
</dbReference>
<dbReference type="Reactome" id="R-DDI-5689880">
    <property type="pathway name" value="Ub-specific processing proteases"/>
</dbReference>
<dbReference type="Reactome" id="R-DDI-72689">
    <property type="pathway name" value="Formation of a pool of free 40S subunits"/>
</dbReference>
<dbReference type="Reactome" id="R-DDI-72695">
    <property type="pathway name" value="Formation of the ternary complex, and subsequently, the 43S complex"/>
</dbReference>
<dbReference type="Reactome" id="R-DDI-72702">
    <property type="pathway name" value="Ribosomal scanning and start codon recognition"/>
</dbReference>
<dbReference type="Reactome" id="R-DDI-72706">
    <property type="pathway name" value="GTP hydrolysis and joining of the 60S ribosomal subunit"/>
</dbReference>
<dbReference type="Reactome" id="R-DDI-936440">
    <property type="pathway name" value="Negative regulators of DDX58/IFIH1 signaling"/>
</dbReference>
<dbReference type="Reactome" id="R-DDI-975956">
    <property type="pathway name" value="Nonsense Mediated Decay (NMD) independent of the Exon Junction Complex (EJC)"/>
</dbReference>
<dbReference type="Reactome" id="R-DDI-975957">
    <property type="pathway name" value="Nonsense Mediated Decay (NMD) enhanced by the Exon Junction Complex (EJC)"/>
</dbReference>
<dbReference type="PRO" id="PR:Q54ZW5"/>
<dbReference type="Proteomes" id="UP000002195">
    <property type="component" value="Chromosome 2"/>
</dbReference>
<dbReference type="GO" id="GO:0005829">
    <property type="term" value="C:cytosol"/>
    <property type="evidence" value="ECO:0000318"/>
    <property type="project" value="GO_Central"/>
</dbReference>
<dbReference type="GO" id="GO:0022627">
    <property type="term" value="C:cytosolic small ribosomal subunit"/>
    <property type="evidence" value="ECO:0007669"/>
    <property type="project" value="UniProtKB-UniRule"/>
</dbReference>
<dbReference type="GO" id="GO:0031012">
    <property type="term" value="C:extracellular matrix"/>
    <property type="evidence" value="ECO:0007005"/>
    <property type="project" value="dictyBase"/>
</dbReference>
<dbReference type="GO" id="GO:0003735">
    <property type="term" value="F:structural constituent of ribosome"/>
    <property type="evidence" value="ECO:0007669"/>
    <property type="project" value="UniProtKB-UniRule"/>
</dbReference>
<dbReference type="GO" id="GO:0006412">
    <property type="term" value="P:translation"/>
    <property type="evidence" value="ECO:0007669"/>
    <property type="project" value="UniProtKB-UniRule"/>
</dbReference>
<dbReference type="HAMAP" id="MF_03122">
    <property type="entry name" value="Ribosomal_eS1_euk"/>
    <property type="match status" value="1"/>
</dbReference>
<dbReference type="InterPro" id="IPR001593">
    <property type="entry name" value="Ribosomal_eS1"/>
</dbReference>
<dbReference type="InterPro" id="IPR027500">
    <property type="entry name" value="Ribosomal_eS1_euk"/>
</dbReference>
<dbReference type="PANTHER" id="PTHR11830">
    <property type="entry name" value="40S RIBOSOMAL PROTEIN S3A"/>
    <property type="match status" value="1"/>
</dbReference>
<dbReference type="Pfam" id="PF01015">
    <property type="entry name" value="Ribosomal_S3Ae"/>
    <property type="match status" value="1"/>
</dbReference>
<dbReference type="SMART" id="SM01397">
    <property type="entry name" value="Ribosomal_S3Ae"/>
    <property type="match status" value="1"/>
</dbReference>
<sequence length="273" mass="30357">MADKKKKGSKKGGKKVDPFTRKEWYVVRAPTQFFKSPADNKVGFTPVNRTQGTKLASDGLKGRVYEVSLADMKDDESQVFRKIKLRAEEVEGRNVLTNFYGMDLTSDKLRSLIHKWSTLIECFVDVKTTDGYFLRVFAICFTKKGESQKKKTSYAKTSRVKAIRKKMVDILTETVSSNDLKTVVDYLIGVSLNGVTTNASGFAPTLAEKIRIEGSSIFPIHNVFIRKVKVLKTPKVDAAKLSELYASSATSTIAPTEEVGTAVERTEETTTTA</sequence>
<protein>
    <recommendedName>
        <fullName evidence="1">Small ribosomal subunit protein eS1</fullName>
    </recommendedName>
    <alternativeName>
        <fullName evidence="2">40S ribosomal protein S3a</fullName>
    </alternativeName>
</protein>
<keyword id="KW-0963">Cytoplasm</keyword>
<keyword id="KW-1185">Reference proteome</keyword>
<keyword id="KW-0687">Ribonucleoprotein</keyword>
<keyword id="KW-0689">Ribosomal protein</keyword>
<organism>
    <name type="scientific">Dictyostelium discoideum</name>
    <name type="common">Social amoeba</name>
    <dbReference type="NCBI Taxonomy" id="44689"/>
    <lineage>
        <taxon>Eukaryota</taxon>
        <taxon>Amoebozoa</taxon>
        <taxon>Evosea</taxon>
        <taxon>Eumycetozoa</taxon>
        <taxon>Dictyostelia</taxon>
        <taxon>Dictyosteliales</taxon>
        <taxon>Dictyosteliaceae</taxon>
        <taxon>Dictyostelium</taxon>
    </lineage>
</organism>
<comment type="subunit">
    <text evidence="1">Component of the small ribosomal subunit. Mature ribosomes consist of a small (40S) and a large (60S) subunit. The 40S subunit contains about 33 different proteins and 1 molecule of RNA (18S). The 60S subunit contains about 49 different proteins and 3 molecules of RNA (25S, 5.8S and 5S).</text>
</comment>
<comment type="subcellular location">
    <subcellularLocation>
        <location evidence="1">Cytoplasm</location>
    </subcellularLocation>
</comment>
<comment type="similarity">
    <text evidence="1">Belongs to the eukaryotic ribosomal protein eS1 family.</text>
</comment>
<gene>
    <name type="primary">rps3a</name>
    <name type="ORF">DDB_G0277345</name>
</gene>
<feature type="chain" id="PRO_0000319985" description="Small ribosomal subunit protein eS1">
    <location>
        <begin position="1"/>
        <end position="273"/>
    </location>
</feature>
<reference key="1">
    <citation type="journal article" date="2002" name="Nature">
        <title>Sequence and analysis of chromosome 2 of Dictyostelium discoideum.</title>
        <authorList>
            <person name="Gloeckner G."/>
            <person name="Eichinger L."/>
            <person name="Szafranski K."/>
            <person name="Pachebat J.A."/>
            <person name="Bankier A.T."/>
            <person name="Dear P.H."/>
            <person name="Lehmann R."/>
            <person name="Baumgart C."/>
            <person name="Parra G."/>
            <person name="Abril J.F."/>
            <person name="Guigo R."/>
            <person name="Kumpf K."/>
            <person name="Tunggal B."/>
            <person name="Cox E.C."/>
            <person name="Quail M.A."/>
            <person name="Platzer M."/>
            <person name="Rosenthal A."/>
            <person name="Noegel A.A."/>
        </authorList>
    </citation>
    <scope>NUCLEOTIDE SEQUENCE [LARGE SCALE GENOMIC DNA]</scope>
    <source>
        <strain>AX4</strain>
    </source>
</reference>
<reference key="2">
    <citation type="journal article" date="2005" name="Nature">
        <title>The genome of the social amoeba Dictyostelium discoideum.</title>
        <authorList>
            <person name="Eichinger L."/>
            <person name="Pachebat J.A."/>
            <person name="Gloeckner G."/>
            <person name="Rajandream M.A."/>
            <person name="Sucgang R."/>
            <person name="Berriman M."/>
            <person name="Song J."/>
            <person name="Olsen R."/>
            <person name="Szafranski K."/>
            <person name="Xu Q."/>
            <person name="Tunggal B."/>
            <person name="Kummerfeld S."/>
            <person name="Madera M."/>
            <person name="Konfortov B.A."/>
            <person name="Rivero F."/>
            <person name="Bankier A.T."/>
            <person name="Lehmann R."/>
            <person name="Hamlin N."/>
            <person name="Davies R."/>
            <person name="Gaudet P."/>
            <person name="Fey P."/>
            <person name="Pilcher K."/>
            <person name="Chen G."/>
            <person name="Saunders D."/>
            <person name="Sodergren E.J."/>
            <person name="Davis P."/>
            <person name="Kerhornou A."/>
            <person name="Nie X."/>
            <person name="Hall N."/>
            <person name="Anjard C."/>
            <person name="Hemphill L."/>
            <person name="Bason N."/>
            <person name="Farbrother P."/>
            <person name="Desany B."/>
            <person name="Just E."/>
            <person name="Morio T."/>
            <person name="Rost R."/>
            <person name="Churcher C.M."/>
            <person name="Cooper J."/>
            <person name="Haydock S."/>
            <person name="van Driessche N."/>
            <person name="Cronin A."/>
            <person name="Goodhead I."/>
            <person name="Muzny D.M."/>
            <person name="Mourier T."/>
            <person name="Pain A."/>
            <person name="Lu M."/>
            <person name="Harper D."/>
            <person name="Lindsay R."/>
            <person name="Hauser H."/>
            <person name="James K.D."/>
            <person name="Quiles M."/>
            <person name="Madan Babu M."/>
            <person name="Saito T."/>
            <person name="Buchrieser C."/>
            <person name="Wardroper A."/>
            <person name="Felder M."/>
            <person name="Thangavelu M."/>
            <person name="Johnson D."/>
            <person name="Knights A."/>
            <person name="Loulseged H."/>
            <person name="Mungall K.L."/>
            <person name="Oliver K."/>
            <person name="Price C."/>
            <person name="Quail M.A."/>
            <person name="Urushihara H."/>
            <person name="Hernandez J."/>
            <person name="Rabbinowitsch E."/>
            <person name="Steffen D."/>
            <person name="Sanders M."/>
            <person name="Ma J."/>
            <person name="Kohara Y."/>
            <person name="Sharp S."/>
            <person name="Simmonds M.N."/>
            <person name="Spiegler S."/>
            <person name="Tivey A."/>
            <person name="Sugano S."/>
            <person name="White B."/>
            <person name="Walker D."/>
            <person name="Woodward J.R."/>
            <person name="Winckler T."/>
            <person name="Tanaka Y."/>
            <person name="Shaulsky G."/>
            <person name="Schleicher M."/>
            <person name="Weinstock G.M."/>
            <person name="Rosenthal A."/>
            <person name="Cox E.C."/>
            <person name="Chisholm R.L."/>
            <person name="Gibbs R.A."/>
            <person name="Loomis W.F."/>
            <person name="Platzer M."/>
            <person name="Kay R.R."/>
            <person name="Williams J.G."/>
            <person name="Dear P.H."/>
            <person name="Noegel A.A."/>
            <person name="Barrell B.G."/>
            <person name="Kuspa A."/>
        </authorList>
    </citation>
    <scope>NUCLEOTIDE SEQUENCE [LARGE SCALE GENOMIC DNA]</scope>
    <source>
        <strain>AX4</strain>
    </source>
</reference>
<name>RS3A_DICDI</name>
<evidence type="ECO:0000255" key="1">
    <source>
        <dbReference type="HAMAP-Rule" id="MF_03122"/>
    </source>
</evidence>
<evidence type="ECO:0000305" key="2"/>